<evidence type="ECO:0000256" key="1">
    <source>
        <dbReference type="SAM" id="MobiDB-lite"/>
    </source>
</evidence>
<organismHost>
    <name type="scientific">Ictaluridae</name>
    <name type="common">bullhead catfishes</name>
    <dbReference type="NCBI Taxonomy" id="7996"/>
</organismHost>
<organism>
    <name type="scientific">Ictalurid herpesvirus 1 (strain Auburn)</name>
    <name type="common">IcHV-1</name>
    <name type="synonym">Channel catfish herpesvirus</name>
    <dbReference type="NCBI Taxonomy" id="766178"/>
    <lineage>
        <taxon>Viruses</taxon>
        <taxon>Duplodnaviria</taxon>
        <taxon>Heunggongvirae</taxon>
        <taxon>Peploviricota</taxon>
        <taxon>Herviviricetes</taxon>
        <taxon>Herpesvirales</taxon>
        <taxon>Alloherpesviridae</taxon>
        <taxon>Ictavirus</taxon>
        <taxon>Ictavirus ictaluridallo1</taxon>
        <taxon>Ictalurid herpesvirus 1</taxon>
    </lineage>
</organism>
<accession>Q00111</accession>
<sequence>MTFQFQNEWNPILSDISDSIVDRTAAQWTPATYWGLLEADARAIRPVQQYVCNGPCCSTLWAGPVPGYVITQFVPPVTYPNPYRVVAAPGCAPGSEWCEPPTVSAPPPPSQFSDEPTSPELAPAVPKIDIHEAPVATVSSPTSPRPITTESSRVSPTKEKWGRKRVHKKTHAEATWIPQILKRGMSLSSLLPAAARGQRSAVRRRVTFTNSKDVLYYDKYSAPVMIQGNTVYVEKTFSDK</sequence>
<feature type="chain" id="PRO_0000222127" description="Uncharacterized protein ORF45">
    <location>
        <begin position="1"/>
        <end position="240"/>
    </location>
</feature>
<feature type="region of interest" description="Disordered" evidence="1">
    <location>
        <begin position="99"/>
        <end position="121"/>
    </location>
</feature>
<feature type="region of interest" description="Disordered" evidence="1">
    <location>
        <begin position="136"/>
        <end position="167"/>
    </location>
</feature>
<feature type="compositionally biased region" description="Polar residues" evidence="1">
    <location>
        <begin position="137"/>
        <end position="155"/>
    </location>
</feature>
<protein>
    <recommendedName>
        <fullName>Uncharacterized protein ORF45</fullName>
    </recommendedName>
</protein>
<dbReference type="EMBL" id="M75136">
    <property type="protein sequence ID" value="AAA88148.1"/>
    <property type="molecule type" value="Genomic_DNA"/>
</dbReference>
<dbReference type="PIR" id="A36791">
    <property type="entry name" value="A36791"/>
</dbReference>
<dbReference type="RefSeq" id="NP_041136.1">
    <property type="nucleotide sequence ID" value="NC_001493.2"/>
</dbReference>
<dbReference type="SMR" id="Q00111"/>
<dbReference type="GeneID" id="1488405"/>
<dbReference type="KEGG" id="vg:1488405"/>
<dbReference type="Proteomes" id="UP000007643">
    <property type="component" value="Segment"/>
</dbReference>
<gene>
    <name type="primary">ORF45</name>
</gene>
<keyword id="KW-1185">Reference proteome</keyword>
<proteinExistence type="predicted"/>
<name>VG45_ICHVA</name>
<reference key="1">
    <citation type="journal article" date="1992" name="Virology">
        <title>Channel catfish virus: a new type of herpesvirus.</title>
        <authorList>
            <person name="Davison A.J."/>
        </authorList>
    </citation>
    <scope>NUCLEOTIDE SEQUENCE [LARGE SCALE GENOMIC DNA]</scope>
</reference>